<protein>
    <recommendedName>
        <fullName>Uncharacterized protein YyaP</fullName>
    </recommendedName>
</protein>
<name>YYAP_BACSU</name>
<gene>
    <name type="primary">yyaP</name>
    <name type="ordered locus">BSU40760</name>
</gene>
<proteinExistence type="evidence at protein level"/>
<dbReference type="EMBL" id="D26185">
    <property type="protein sequence ID" value="BAA05207.1"/>
    <property type="molecule type" value="Genomic_DNA"/>
</dbReference>
<dbReference type="EMBL" id="AL009126">
    <property type="protein sequence ID" value="CAB16113.1"/>
    <property type="molecule type" value="Genomic_DNA"/>
</dbReference>
<dbReference type="PIR" id="S66001">
    <property type="entry name" value="S66001"/>
</dbReference>
<dbReference type="RefSeq" id="NP_391956.1">
    <property type="nucleotide sequence ID" value="NC_000964.3"/>
</dbReference>
<dbReference type="RefSeq" id="WP_003243497.1">
    <property type="nucleotide sequence ID" value="NZ_OZ025638.1"/>
</dbReference>
<dbReference type="PDB" id="2GD9">
    <property type="method" value="X-ray"/>
    <property type="resolution" value="2.30 A"/>
    <property type="chains" value="A/B=1-188"/>
</dbReference>
<dbReference type="PDBsum" id="2GD9"/>
<dbReference type="SMR" id="P37508"/>
<dbReference type="FunCoup" id="P37508">
    <property type="interactions" value="113"/>
</dbReference>
<dbReference type="STRING" id="224308.BSU40760"/>
<dbReference type="PaxDb" id="224308-BSU40760"/>
<dbReference type="EnsemblBacteria" id="CAB16113">
    <property type="protein sequence ID" value="CAB16113"/>
    <property type="gene ID" value="BSU_40760"/>
</dbReference>
<dbReference type="GeneID" id="937903"/>
<dbReference type="KEGG" id="bsu:BSU40760"/>
<dbReference type="PATRIC" id="fig|224308.179.peg.4418"/>
<dbReference type="eggNOG" id="COG0262">
    <property type="taxonomic scope" value="Bacteria"/>
</dbReference>
<dbReference type="InParanoid" id="P37508"/>
<dbReference type="OrthoDB" id="195113at2"/>
<dbReference type="PhylomeDB" id="P37508"/>
<dbReference type="BioCyc" id="BSUB:BSU40760-MONOMER"/>
<dbReference type="EvolutionaryTrace" id="P37508"/>
<dbReference type="Proteomes" id="UP000001570">
    <property type="component" value="Chromosome"/>
</dbReference>
<dbReference type="GO" id="GO:0016020">
    <property type="term" value="C:membrane"/>
    <property type="evidence" value="ECO:0007669"/>
    <property type="project" value="UniProtKB-SubCell"/>
</dbReference>
<dbReference type="GO" id="GO:0008703">
    <property type="term" value="F:5-amino-6-(5-phosphoribosylamino)uracil reductase activity"/>
    <property type="evidence" value="ECO:0007669"/>
    <property type="project" value="InterPro"/>
</dbReference>
<dbReference type="GO" id="GO:0009231">
    <property type="term" value="P:riboflavin biosynthetic process"/>
    <property type="evidence" value="ECO:0007669"/>
    <property type="project" value="InterPro"/>
</dbReference>
<dbReference type="Gene3D" id="3.40.430.10">
    <property type="entry name" value="Dihydrofolate Reductase, subunit A"/>
    <property type="match status" value="1"/>
</dbReference>
<dbReference type="InterPro" id="IPR024072">
    <property type="entry name" value="DHFR-like_dom_sf"/>
</dbReference>
<dbReference type="InterPro" id="IPR002734">
    <property type="entry name" value="RibDG_C"/>
</dbReference>
<dbReference type="InterPro" id="IPR050765">
    <property type="entry name" value="Riboflavin_Biosynth_HTPR"/>
</dbReference>
<dbReference type="PANTHER" id="PTHR38011:SF11">
    <property type="entry name" value="2,5-DIAMINO-6-RIBOSYLAMINO-4(3H)-PYRIMIDINONE 5'-PHOSPHATE REDUCTASE"/>
    <property type="match status" value="1"/>
</dbReference>
<dbReference type="PANTHER" id="PTHR38011">
    <property type="entry name" value="DIHYDROFOLATE REDUCTASE FAMILY PROTEIN (AFU_ORTHOLOGUE AFUA_8G06820)"/>
    <property type="match status" value="1"/>
</dbReference>
<dbReference type="Pfam" id="PF01872">
    <property type="entry name" value="RibD_C"/>
    <property type="match status" value="1"/>
</dbReference>
<dbReference type="SUPFAM" id="SSF53597">
    <property type="entry name" value="Dihydrofolate reductase-like"/>
    <property type="match status" value="1"/>
</dbReference>
<feature type="chain" id="PRO_0000050056" description="Uncharacterized protein YyaP">
    <location>
        <begin position="1"/>
        <end position="188"/>
    </location>
</feature>
<feature type="transmembrane region" description="Helical" evidence="1">
    <location>
        <begin position="121"/>
        <end position="139"/>
    </location>
</feature>
<feature type="strand" evidence="3">
    <location>
        <begin position="10"/>
        <end position="16"/>
    </location>
</feature>
<feature type="strand" evidence="3">
    <location>
        <begin position="20"/>
        <end position="23"/>
    </location>
</feature>
<feature type="helix" evidence="3">
    <location>
        <begin position="40"/>
        <end position="45"/>
    </location>
</feature>
<feature type="strand" evidence="3">
    <location>
        <begin position="47"/>
        <end position="53"/>
    </location>
</feature>
<feature type="helix" evidence="3">
    <location>
        <begin position="54"/>
        <end position="60"/>
    </location>
</feature>
<feature type="helix" evidence="3">
    <location>
        <begin position="76"/>
        <end position="82"/>
    </location>
</feature>
<feature type="strand" evidence="3">
    <location>
        <begin position="83"/>
        <end position="88"/>
    </location>
</feature>
<feature type="strand" evidence="3">
    <location>
        <begin position="91"/>
        <end position="93"/>
    </location>
</feature>
<feature type="turn" evidence="3">
    <location>
        <begin position="94"/>
        <end position="97"/>
    </location>
</feature>
<feature type="strand" evidence="3">
    <location>
        <begin position="98"/>
        <end position="100"/>
    </location>
</feature>
<feature type="helix" evidence="3">
    <location>
        <begin position="103"/>
        <end position="115"/>
    </location>
</feature>
<feature type="strand" evidence="3">
    <location>
        <begin position="119"/>
        <end position="125"/>
    </location>
</feature>
<feature type="helix" evidence="3">
    <location>
        <begin position="127"/>
        <end position="135"/>
    </location>
</feature>
<feature type="strand" evidence="3">
    <location>
        <begin position="141"/>
        <end position="146"/>
    </location>
</feature>
<feature type="strand" evidence="3">
    <location>
        <begin position="148"/>
        <end position="150"/>
    </location>
</feature>
<feature type="strand" evidence="3">
    <location>
        <begin position="152"/>
        <end position="158"/>
    </location>
</feature>
<feature type="strand" evidence="3">
    <location>
        <begin position="168"/>
        <end position="174"/>
    </location>
</feature>
<feature type="strand" evidence="3">
    <location>
        <begin position="180"/>
        <end position="185"/>
    </location>
</feature>
<organism>
    <name type="scientific">Bacillus subtilis (strain 168)</name>
    <dbReference type="NCBI Taxonomy" id="224308"/>
    <lineage>
        <taxon>Bacteria</taxon>
        <taxon>Bacillati</taxon>
        <taxon>Bacillota</taxon>
        <taxon>Bacilli</taxon>
        <taxon>Bacillales</taxon>
        <taxon>Bacillaceae</taxon>
        <taxon>Bacillus</taxon>
    </lineage>
</organism>
<reference key="1">
    <citation type="journal article" date="1994" name="DNA Res.">
        <title>Systematic sequencing of the 180 kilobase region of the Bacillus subtilis chromosome containing the replication origin.</title>
        <authorList>
            <person name="Ogasawara N."/>
            <person name="Nakai S."/>
            <person name="Yoshikawa H."/>
        </authorList>
    </citation>
    <scope>NUCLEOTIDE SEQUENCE [GENOMIC DNA]</scope>
    <source>
        <strain>168</strain>
    </source>
</reference>
<reference key="2">
    <citation type="journal article" date="1997" name="Nature">
        <title>The complete genome sequence of the Gram-positive bacterium Bacillus subtilis.</title>
        <authorList>
            <person name="Kunst F."/>
            <person name="Ogasawara N."/>
            <person name="Moszer I."/>
            <person name="Albertini A.M."/>
            <person name="Alloni G."/>
            <person name="Azevedo V."/>
            <person name="Bertero M.G."/>
            <person name="Bessieres P."/>
            <person name="Bolotin A."/>
            <person name="Borchert S."/>
            <person name="Borriss R."/>
            <person name="Boursier L."/>
            <person name="Brans A."/>
            <person name="Braun M."/>
            <person name="Brignell S.C."/>
            <person name="Bron S."/>
            <person name="Brouillet S."/>
            <person name="Bruschi C.V."/>
            <person name="Caldwell B."/>
            <person name="Capuano V."/>
            <person name="Carter N.M."/>
            <person name="Choi S.-K."/>
            <person name="Codani J.-J."/>
            <person name="Connerton I.F."/>
            <person name="Cummings N.J."/>
            <person name="Daniel R.A."/>
            <person name="Denizot F."/>
            <person name="Devine K.M."/>
            <person name="Duesterhoeft A."/>
            <person name="Ehrlich S.D."/>
            <person name="Emmerson P.T."/>
            <person name="Entian K.-D."/>
            <person name="Errington J."/>
            <person name="Fabret C."/>
            <person name="Ferrari E."/>
            <person name="Foulger D."/>
            <person name="Fritz C."/>
            <person name="Fujita M."/>
            <person name="Fujita Y."/>
            <person name="Fuma S."/>
            <person name="Galizzi A."/>
            <person name="Galleron N."/>
            <person name="Ghim S.-Y."/>
            <person name="Glaser P."/>
            <person name="Goffeau A."/>
            <person name="Golightly E.J."/>
            <person name="Grandi G."/>
            <person name="Guiseppi G."/>
            <person name="Guy B.J."/>
            <person name="Haga K."/>
            <person name="Haiech J."/>
            <person name="Harwood C.R."/>
            <person name="Henaut A."/>
            <person name="Hilbert H."/>
            <person name="Holsappel S."/>
            <person name="Hosono S."/>
            <person name="Hullo M.-F."/>
            <person name="Itaya M."/>
            <person name="Jones L.-M."/>
            <person name="Joris B."/>
            <person name="Karamata D."/>
            <person name="Kasahara Y."/>
            <person name="Klaerr-Blanchard M."/>
            <person name="Klein C."/>
            <person name="Kobayashi Y."/>
            <person name="Koetter P."/>
            <person name="Koningstein G."/>
            <person name="Krogh S."/>
            <person name="Kumano M."/>
            <person name="Kurita K."/>
            <person name="Lapidus A."/>
            <person name="Lardinois S."/>
            <person name="Lauber J."/>
            <person name="Lazarevic V."/>
            <person name="Lee S.-M."/>
            <person name="Levine A."/>
            <person name="Liu H."/>
            <person name="Masuda S."/>
            <person name="Mauel C."/>
            <person name="Medigue C."/>
            <person name="Medina N."/>
            <person name="Mellado R.P."/>
            <person name="Mizuno M."/>
            <person name="Moestl D."/>
            <person name="Nakai S."/>
            <person name="Noback M."/>
            <person name="Noone D."/>
            <person name="O'Reilly M."/>
            <person name="Ogawa K."/>
            <person name="Ogiwara A."/>
            <person name="Oudega B."/>
            <person name="Park S.-H."/>
            <person name="Parro V."/>
            <person name="Pohl T.M."/>
            <person name="Portetelle D."/>
            <person name="Porwollik S."/>
            <person name="Prescott A.M."/>
            <person name="Presecan E."/>
            <person name="Pujic P."/>
            <person name="Purnelle B."/>
            <person name="Rapoport G."/>
            <person name="Rey M."/>
            <person name="Reynolds S."/>
            <person name="Rieger M."/>
            <person name="Rivolta C."/>
            <person name="Rocha E."/>
            <person name="Roche B."/>
            <person name="Rose M."/>
            <person name="Sadaie Y."/>
            <person name="Sato T."/>
            <person name="Scanlan E."/>
            <person name="Schleich S."/>
            <person name="Schroeter R."/>
            <person name="Scoffone F."/>
            <person name="Sekiguchi J."/>
            <person name="Sekowska A."/>
            <person name="Seror S.J."/>
            <person name="Serror P."/>
            <person name="Shin B.-S."/>
            <person name="Soldo B."/>
            <person name="Sorokin A."/>
            <person name="Tacconi E."/>
            <person name="Takagi T."/>
            <person name="Takahashi H."/>
            <person name="Takemaru K."/>
            <person name="Takeuchi M."/>
            <person name="Tamakoshi A."/>
            <person name="Tanaka T."/>
            <person name="Terpstra P."/>
            <person name="Tognoni A."/>
            <person name="Tosato V."/>
            <person name="Uchiyama S."/>
            <person name="Vandenbol M."/>
            <person name="Vannier F."/>
            <person name="Vassarotti A."/>
            <person name="Viari A."/>
            <person name="Wambutt R."/>
            <person name="Wedler E."/>
            <person name="Wedler H."/>
            <person name="Weitzenegger T."/>
            <person name="Winters P."/>
            <person name="Wipat A."/>
            <person name="Yamamoto H."/>
            <person name="Yamane K."/>
            <person name="Yasumoto K."/>
            <person name="Yata K."/>
            <person name="Yoshida K."/>
            <person name="Yoshikawa H.-F."/>
            <person name="Zumstein E."/>
            <person name="Yoshikawa H."/>
            <person name="Danchin A."/>
        </authorList>
    </citation>
    <scope>NUCLEOTIDE SEQUENCE [LARGE SCALE GENOMIC DNA]</scope>
    <source>
        <strain>168</strain>
    </source>
</reference>
<reference key="3">
    <citation type="submission" date="2006-03" db="PDB data bank">
        <title>Crystal structure of (2636623) from Bacillus subtilis at 2.30 A resolution.</title>
        <authorList>
            <consortium name="Joint center for structural genomics (JCSG)"/>
        </authorList>
    </citation>
    <scope>X-RAY CRYSTALLOGRAPHY (2.3 ANGSTROMS) IN COMPLEX WITH PHOSPHATE</scope>
</reference>
<sequence length="188" mass="21737">MTNNLKQRRIILDLAVTLDGFIEGKNGEVDWCIMDPDMGFTDFLNQIDTILYGRKSFDLWGQYIPKNEDPDTEKELWKLVHSKKKYVFSRTQNEIDNQAIFINDNILEEVNKLKKNPGKDIWLYGGASLITTFINLGLVDEFRLSIHPVVLGEGKPLFIDVKQRINLKMVNTRTFSSGVVQIVYHWNG</sequence>
<evidence type="ECO:0000255" key="1"/>
<evidence type="ECO:0000305" key="2"/>
<evidence type="ECO:0007829" key="3">
    <source>
        <dbReference type="PDB" id="2GD9"/>
    </source>
</evidence>
<accession>P37508</accession>
<keyword id="KW-0002">3D-structure</keyword>
<keyword id="KW-0472">Membrane</keyword>
<keyword id="KW-1185">Reference proteome</keyword>
<keyword id="KW-0812">Transmembrane</keyword>
<keyword id="KW-1133">Transmembrane helix</keyword>
<comment type="subcellular location">
    <subcellularLocation>
        <location evidence="2">Membrane</location>
        <topology evidence="2">Single-pass membrane protein</topology>
    </subcellularLocation>
</comment>
<comment type="similarity">
    <text evidence="2">To B.subtilis YwjB.</text>
</comment>